<sequence>MHIRSLELRDYRSWPELKVDLEPGITVFIGRNGFGKTNIVEAIGYLAHLSSHRVSSDAPLVRAHAENARVSAVAVNQGRELAAHLLIKPHAANQASLNRTKVRTPRELLGVVKTVLFAPEDLALVKGEPAERRRYLDDIIATRQPRMAGVKADYDKVLKQRNALLKTATIALRRGYGTEEGAAALSTLDTWDGQLARLGAEVMAARFALLNELGPKIYEAYTTIAPESRPAAVNYKTTIDQGLSQFSEFDAGIIEATLLTELAAKRQREIERGSSLVGPHRDDVDLMLGDQPAKGFASHGETWSFALSLRIAEFNLLKSDGTDPILILDDVFSELDAGRREKLVGIAQEVEQVLITAAVHDDLPENLKKVLTAQHTVTVQDTGTGRISLLDVQP</sequence>
<organism>
    <name type="scientific">Corynebacterium glutamicum (strain ATCC 13032 / DSM 20300 / JCM 1318 / BCRC 11384 / CCUG 27702 / LMG 3730 / NBRC 12168 / NCIMB 10025 / NRRL B-2784 / 534)</name>
    <dbReference type="NCBI Taxonomy" id="196627"/>
    <lineage>
        <taxon>Bacteria</taxon>
        <taxon>Bacillati</taxon>
        <taxon>Actinomycetota</taxon>
        <taxon>Actinomycetes</taxon>
        <taxon>Mycobacteriales</taxon>
        <taxon>Corynebacteriaceae</taxon>
        <taxon>Corynebacterium</taxon>
    </lineage>
</organism>
<comment type="function">
    <text evidence="1">The RecF protein is involved in DNA metabolism; it is required for DNA replication and normal SOS inducibility. RecF binds preferentially to single-stranded, linear DNA. It also seems to bind ATP.</text>
</comment>
<comment type="subcellular location">
    <subcellularLocation>
        <location evidence="1">Cytoplasm</location>
    </subcellularLocation>
</comment>
<comment type="similarity">
    <text evidence="1">Belongs to the RecF family.</text>
</comment>
<name>RECF_CORGL</name>
<keyword id="KW-0067">ATP-binding</keyword>
<keyword id="KW-0963">Cytoplasm</keyword>
<keyword id="KW-0227">DNA damage</keyword>
<keyword id="KW-0234">DNA repair</keyword>
<keyword id="KW-0235">DNA replication</keyword>
<keyword id="KW-0238">DNA-binding</keyword>
<keyword id="KW-0547">Nucleotide-binding</keyword>
<keyword id="KW-1185">Reference proteome</keyword>
<keyword id="KW-0742">SOS response</keyword>
<evidence type="ECO:0000255" key="1">
    <source>
        <dbReference type="HAMAP-Rule" id="MF_00365"/>
    </source>
</evidence>
<gene>
    <name evidence="1" type="primary">recF</name>
    <name type="ordered locus">Cgl0004</name>
    <name type="ordered locus">cg0005</name>
</gene>
<proteinExistence type="inferred from homology"/>
<dbReference type="EMBL" id="BA000036">
    <property type="protein sequence ID" value="BAB97397.1"/>
    <property type="molecule type" value="Genomic_DNA"/>
</dbReference>
<dbReference type="EMBL" id="BX927148">
    <property type="protein sequence ID" value="CAF18569.1"/>
    <property type="molecule type" value="Genomic_DNA"/>
</dbReference>
<dbReference type="RefSeq" id="NP_599255.1">
    <property type="nucleotide sequence ID" value="NC_003450.3"/>
</dbReference>
<dbReference type="RefSeq" id="WP_011013310.1">
    <property type="nucleotide sequence ID" value="NC_006958.1"/>
</dbReference>
<dbReference type="SMR" id="Q6M8X7"/>
<dbReference type="STRING" id="196627.cg0005"/>
<dbReference type="GeneID" id="1021348"/>
<dbReference type="KEGG" id="cgb:cg0005"/>
<dbReference type="KEGG" id="cgl:Cgl0004"/>
<dbReference type="PATRIC" id="fig|196627.13.peg.3"/>
<dbReference type="eggNOG" id="COG1195">
    <property type="taxonomic scope" value="Bacteria"/>
</dbReference>
<dbReference type="HOGENOM" id="CLU_040267_1_1_11"/>
<dbReference type="OrthoDB" id="9803889at2"/>
<dbReference type="BioCyc" id="CORYNE:G18NG-9544-MONOMER"/>
<dbReference type="Proteomes" id="UP000000582">
    <property type="component" value="Chromosome"/>
</dbReference>
<dbReference type="Proteomes" id="UP000001009">
    <property type="component" value="Chromosome"/>
</dbReference>
<dbReference type="GO" id="GO:0005737">
    <property type="term" value="C:cytoplasm"/>
    <property type="evidence" value="ECO:0007669"/>
    <property type="project" value="UniProtKB-SubCell"/>
</dbReference>
<dbReference type="GO" id="GO:0005524">
    <property type="term" value="F:ATP binding"/>
    <property type="evidence" value="ECO:0007669"/>
    <property type="project" value="UniProtKB-UniRule"/>
</dbReference>
<dbReference type="GO" id="GO:0003697">
    <property type="term" value="F:single-stranded DNA binding"/>
    <property type="evidence" value="ECO:0007669"/>
    <property type="project" value="UniProtKB-UniRule"/>
</dbReference>
<dbReference type="GO" id="GO:0006260">
    <property type="term" value="P:DNA replication"/>
    <property type="evidence" value="ECO:0007669"/>
    <property type="project" value="UniProtKB-UniRule"/>
</dbReference>
<dbReference type="GO" id="GO:0000731">
    <property type="term" value="P:DNA synthesis involved in DNA repair"/>
    <property type="evidence" value="ECO:0007669"/>
    <property type="project" value="TreeGrafter"/>
</dbReference>
<dbReference type="GO" id="GO:0006302">
    <property type="term" value="P:double-strand break repair"/>
    <property type="evidence" value="ECO:0007669"/>
    <property type="project" value="TreeGrafter"/>
</dbReference>
<dbReference type="GO" id="GO:0009432">
    <property type="term" value="P:SOS response"/>
    <property type="evidence" value="ECO:0007669"/>
    <property type="project" value="UniProtKB-UniRule"/>
</dbReference>
<dbReference type="CDD" id="cd03242">
    <property type="entry name" value="ABC_RecF"/>
    <property type="match status" value="1"/>
</dbReference>
<dbReference type="Gene3D" id="3.40.50.300">
    <property type="entry name" value="P-loop containing nucleotide triphosphate hydrolases"/>
    <property type="match status" value="1"/>
</dbReference>
<dbReference type="Gene3D" id="1.20.1050.90">
    <property type="entry name" value="RecF/RecN/SMC, N-terminal domain"/>
    <property type="match status" value="1"/>
</dbReference>
<dbReference type="HAMAP" id="MF_00365">
    <property type="entry name" value="RecF"/>
    <property type="match status" value="1"/>
</dbReference>
<dbReference type="InterPro" id="IPR001238">
    <property type="entry name" value="DNA-binding_RecF"/>
</dbReference>
<dbReference type="InterPro" id="IPR018078">
    <property type="entry name" value="DNA-binding_RecF_CS"/>
</dbReference>
<dbReference type="InterPro" id="IPR027417">
    <property type="entry name" value="P-loop_NTPase"/>
</dbReference>
<dbReference type="InterPro" id="IPR003395">
    <property type="entry name" value="RecF/RecN/SMC_N"/>
</dbReference>
<dbReference type="InterPro" id="IPR042174">
    <property type="entry name" value="RecF_2"/>
</dbReference>
<dbReference type="NCBIfam" id="TIGR00611">
    <property type="entry name" value="recf"/>
    <property type="match status" value="1"/>
</dbReference>
<dbReference type="PANTHER" id="PTHR32182">
    <property type="entry name" value="DNA REPLICATION AND REPAIR PROTEIN RECF"/>
    <property type="match status" value="1"/>
</dbReference>
<dbReference type="PANTHER" id="PTHR32182:SF0">
    <property type="entry name" value="DNA REPLICATION AND REPAIR PROTEIN RECF"/>
    <property type="match status" value="1"/>
</dbReference>
<dbReference type="Pfam" id="PF02463">
    <property type="entry name" value="SMC_N"/>
    <property type="match status" value="1"/>
</dbReference>
<dbReference type="SUPFAM" id="SSF52540">
    <property type="entry name" value="P-loop containing nucleoside triphosphate hydrolases"/>
    <property type="match status" value="1"/>
</dbReference>
<dbReference type="PROSITE" id="PS00617">
    <property type="entry name" value="RECF_1"/>
    <property type="match status" value="1"/>
</dbReference>
<dbReference type="PROSITE" id="PS00618">
    <property type="entry name" value="RECF_2"/>
    <property type="match status" value="1"/>
</dbReference>
<protein>
    <recommendedName>
        <fullName evidence="1">DNA replication and repair protein RecF</fullName>
    </recommendedName>
</protein>
<accession>Q6M8X7</accession>
<accession>Q8NUD5</accession>
<reference key="1">
    <citation type="journal article" date="2003" name="Appl. Microbiol. Biotechnol.">
        <title>The Corynebacterium glutamicum genome: features and impacts on biotechnological processes.</title>
        <authorList>
            <person name="Ikeda M."/>
            <person name="Nakagawa S."/>
        </authorList>
    </citation>
    <scope>NUCLEOTIDE SEQUENCE [LARGE SCALE GENOMIC DNA]</scope>
    <source>
        <strain>ATCC 13032 / DSM 20300 / JCM 1318 / BCRC 11384 / CCUG 27702 / LMG 3730 / NBRC 12168 / NCIMB 10025 / NRRL B-2784 / 534</strain>
    </source>
</reference>
<reference key="2">
    <citation type="journal article" date="2003" name="J. Biotechnol.">
        <title>The complete Corynebacterium glutamicum ATCC 13032 genome sequence and its impact on the production of L-aspartate-derived amino acids and vitamins.</title>
        <authorList>
            <person name="Kalinowski J."/>
            <person name="Bathe B."/>
            <person name="Bartels D."/>
            <person name="Bischoff N."/>
            <person name="Bott M."/>
            <person name="Burkovski A."/>
            <person name="Dusch N."/>
            <person name="Eggeling L."/>
            <person name="Eikmanns B.J."/>
            <person name="Gaigalat L."/>
            <person name="Goesmann A."/>
            <person name="Hartmann M."/>
            <person name="Huthmacher K."/>
            <person name="Kraemer R."/>
            <person name="Linke B."/>
            <person name="McHardy A.C."/>
            <person name="Meyer F."/>
            <person name="Moeckel B."/>
            <person name="Pfefferle W."/>
            <person name="Puehler A."/>
            <person name="Rey D.A."/>
            <person name="Rueckert C."/>
            <person name="Rupp O."/>
            <person name="Sahm H."/>
            <person name="Wendisch V.F."/>
            <person name="Wiegraebe I."/>
            <person name="Tauch A."/>
        </authorList>
    </citation>
    <scope>NUCLEOTIDE SEQUENCE [LARGE SCALE GENOMIC DNA]</scope>
    <source>
        <strain>ATCC 13032 / DSM 20300 / JCM 1318 / BCRC 11384 / CCUG 27702 / LMG 3730 / NBRC 12168 / NCIMB 10025 / NRRL B-2784 / 534</strain>
    </source>
</reference>
<feature type="chain" id="PRO_0000196411" description="DNA replication and repair protein RecF">
    <location>
        <begin position="1"/>
        <end position="394"/>
    </location>
</feature>
<feature type="binding site" evidence="1">
    <location>
        <begin position="30"/>
        <end position="37"/>
    </location>
    <ligand>
        <name>ATP</name>
        <dbReference type="ChEBI" id="CHEBI:30616"/>
    </ligand>
</feature>